<gene>
    <name type="primary">argR</name>
    <name type="ordered locus">PA0893</name>
</gene>
<feature type="chain" id="PRO_0000433134" description="HTH-type transcriptional regulator ArgR">
    <location>
        <begin position="1"/>
        <end position="329"/>
    </location>
</feature>
<feature type="domain" description="HTH araC/xylS-type" evidence="1">
    <location>
        <begin position="214"/>
        <end position="312"/>
    </location>
</feature>
<feature type="DNA-binding region" description="H-T-H motif" evidence="1">
    <location>
        <begin position="231"/>
        <end position="252"/>
    </location>
</feature>
<feature type="DNA-binding region" description="H-T-H motif" evidence="1">
    <location>
        <begin position="279"/>
        <end position="302"/>
    </location>
</feature>
<feature type="region of interest" description="Disordered" evidence="2">
    <location>
        <begin position="307"/>
        <end position="329"/>
    </location>
</feature>
<feature type="compositionally biased region" description="Polar residues" evidence="2">
    <location>
        <begin position="319"/>
        <end position="329"/>
    </location>
</feature>
<name>ARGR_PSEAE</name>
<keyword id="KW-0010">Activator</keyword>
<keyword id="KW-0238">DNA-binding</keyword>
<keyword id="KW-1185">Reference proteome</keyword>
<keyword id="KW-0804">Transcription</keyword>
<keyword id="KW-0805">Transcription regulation</keyword>
<comment type="function">
    <text evidence="4">ArgR could be a transcriptional activator of the dauBAR operon in response to the presence of L-Arg.</text>
</comment>
<sequence>MTAQPQRIGFLLWPATRALTLSLAEEALRAARRLHPEALYEPLFLLAEAPAEEEGWRLPGTAWNGRLEQCSRLFLVADEAPAAVSPALGLALKQLARSGAAIGALSAGIYPLAQLGLLDGYRAAVHWRWHDDFTERFPKVIATNHLFEWDRDRMTACGGMAVLDLLLALLSRDHGAELAGAVSEELVVERIREGNERQRIPLKNRLGSSHPKLTQAVLLMEANIEEPLTTDEIAQHVCVSRRQLERIFKQYLNRVPSQYYLELRLNRARQMLMQTSKSIIQIGLSCGFSSGPHFSSAYRNFFGVTPREDRNQRRGGSAFETTFTPVERG</sequence>
<accession>G3XCU2</accession>
<proteinExistence type="predicted"/>
<organism>
    <name type="scientific">Pseudomonas aeruginosa (strain ATCC 15692 / DSM 22644 / CIP 104116 / JCM 14847 / LMG 12228 / 1C / PRS 101 / PAO1)</name>
    <dbReference type="NCBI Taxonomy" id="208964"/>
    <lineage>
        <taxon>Bacteria</taxon>
        <taxon>Pseudomonadati</taxon>
        <taxon>Pseudomonadota</taxon>
        <taxon>Gammaproteobacteria</taxon>
        <taxon>Pseudomonadales</taxon>
        <taxon>Pseudomonadaceae</taxon>
        <taxon>Pseudomonas</taxon>
    </lineage>
</organism>
<protein>
    <recommendedName>
        <fullName evidence="3">HTH-type transcriptional regulator ArgR</fullName>
    </recommendedName>
</protein>
<dbReference type="EMBL" id="AE004091">
    <property type="protein sequence ID" value="AAG04282.1"/>
    <property type="molecule type" value="Genomic_DNA"/>
</dbReference>
<dbReference type="PIR" id="T44459">
    <property type="entry name" value="T44459"/>
</dbReference>
<dbReference type="RefSeq" id="NP_249584.1">
    <property type="nucleotide sequence ID" value="NC_002516.2"/>
</dbReference>
<dbReference type="RefSeq" id="WP_003085944.1">
    <property type="nucleotide sequence ID" value="NZ_QZGE01000007.1"/>
</dbReference>
<dbReference type="SMR" id="G3XCU2"/>
<dbReference type="FunCoup" id="G3XCU2">
    <property type="interactions" value="27"/>
</dbReference>
<dbReference type="STRING" id="208964.PA0893"/>
<dbReference type="PaxDb" id="208964-PA0893"/>
<dbReference type="DNASU" id="879434"/>
<dbReference type="GeneID" id="879434"/>
<dbReference type="KEGG" id="pae:PA0893"/>
<dbReference type="PseudoCAP" id="PA0893"/>
<dbReference type="HOGENOM" id="CLU_000445_59_0_6"/>
<dbReference type="InParanoid" id="G3XCU2"/>
<dbReference type="OrthoDB" id="6057514at2"/>
<dbReference type="PhylomeDB" id="G3XCU2"/>
<dbReference type="Proteomes" id="UP000002438">
    <property type="component" value="Chromosome"/>
</dbReference>
<dbReference type="CollecTF" id="EXPREG_00000470"/>
<dbReference type="GO" id="GO:0032993">
    <property type="term" value="C:protein-DNA complex"/>
    <property type="evidence" value="ECO:0000315"/>
    <property type="project" value="CollecTF"/>
</dbReference>
<dbReference type="GO" id="GO:0001216">
    <property type="term" value="F:DNA-binding transcription activator activity"/>
    <property type="evidence" value="ECO:0000315"/>
    <property type="project" value="CollecTF"/>
</dbReference>
<dbReference type="GO" id="GO:0001217">
    <property type="term" value="F:DNA-binding transcription repressor activity"/>
    <property type="evidence" value="ECO:0000353"/>
    <property type="project" value="CollecTF"/>
</dbReference>
<dbReference type="GO" id="GO:0000976">
    <property type="term" value="F:transcription cis-regulatory region binding"/>
    <property type="evidence" value="ECO:0000315"/>
    <property type="project" value="CollecTF"/>
</dbReference>
<dbReference type="GO" id="GO:0045893">
    <property type="term" value="P:positive regulation of DNA-templated transcription"/>
    <property type="evidence" value="ECO:0000269"/>
    <property type="project" value="CollecTF"/>
</dbReference>
<dbReference type="GO" id="GO:1900079">
    <property type="term" value="P:regulation of arginine biosynthetic process"/>
    <property type="evidence" value="ECO:0000315"/>
    <property type="project" value="PseudoCAP"/>
</dbReference>
<dbReference type="GO" id="GO:1900081">
    <property type="term" value="P:regulation of arginine catabolic process"/>
    <property type="evidence" value="ECO:0000315"/>
    <property type="project" value="PseudoCAP"/>
</dbReference>
<dbReference type="GO" id="GO:0006355">
    <property type="term" value="P:regulation of DNA-templated transcription"/>
    <property type="evidence" value="ECO:0000318"/>
    <property type="project" value="GO_Central"/>
</dbReference>
<dbReference type="CDD" id="cd03136">
    <property type="entry name" value="GATase1_AraC_ArgR_like"/>
    <property type="match status" value="1"/>
</dbReference>
<dbReference type="FunFam" id="3.40.50.880:FF:000074">
    <property type="entry name" value="Transcriptional regulator ArgR"/>
    <property type="match status" value="1"/>
</dbReference>
<dbReference type="FunFam" id="1.10.10.60:FF:000090">
    <property type="entry name" value="Transcriptional regulator ArgR, AraC family"/>
    <property type="match status" value="1"/>
</dbReference>
<dbReference type="Gene3D" id="3.40.50.880">
    <property type="match status" value="1"/>
</dbReference>
<dbReference type="Gene3D" id="1.10.10.60">
    <property type="entry name" value="Homeodomain-like"/>
    <property type="match status" value="1"/>
</dbReference>
<dbReference type="InterPro" id="IPR029062">
    <property type="entry name" value="Class_I_gatase-like"/>
</dbReference>
<dbReference type="InterPro" id="IPR009057">
    <property type="entry name" value="Homeodomain-like_sf"/>
</dbReference>
<dbReference type="InterPro" id="IPR018060">
    <property type="entry name" value="HTH_AraC"/>
</dbReference>
<dbReference type="InterPro" id="IPR018062">
    <property type="entry name" value="HTH_AraC-typ_CS"/>
</dbReference>
<dbReference type="InterPro" id="IPR020449">
    <property type="entry name" value="Tscrpt_reg_AraC-type_HTH"/>
</dbReference>
<dbReference type="PANTHER" id="PTHR43280">
    <property type="entry name" value="ARAC-FAMILY TRANSCRIPTIONAL REGULATOR"/>
    <property type="match status" value="1"/>
</dbReference>
<dbReference type="PANTHER" id="PTHR43280:SF28">
    <property type="entry name" value="HTH-TYPE TRANSCRIPTIONAL ACTIVATOR RHAS"/>
    <property type="match status" value="1"/>
</dbReference>
<dbReference type="Pfam" id="PF12833">
    <property type="entry name" value="HTH_18"/>
    <property type="match status" value="1"/>
</dbReference>
<dbReference type="PRINTS" id="PR00032">
    <property type="entry name" value="HTHARAC"/>
</dbReference>
<dbReference type="SMART" id="SM00342">
    <property type="entry name" value="HTH_ARAC"/>
    <property type="match status" value="1"/>
</dbReference>
<dbReference type="SUPFAM" id="SSF52317">
    <property type="entry name" value="Class I glutamine amidotransferase-like"/>
    <property type="match status" value="1"/>
</dbReference>
<dbReference type="SUPFAM" id="SSF46689">
    <property type="entry name" value="Homeodomain-like"/>
    <property type="match status" value="2"/>
</dbReference>
<dbReference type="PROSITE" id="PS00041">
    <property type="entry name" value="HTH_ARAC_FAMILY_1"/>
    <property type="match status" value="1"/>
</dbReference>
<dbReference type="PROSITE" id="PS01124">
    <property type="entry name" value="HTH_ARAC_FAMILY_2"/>
    <property type="match status" value="1"/>
</dbReference>
<evidence type="ECO:0000255" key="1">
    <source>
        <dbReference type="PROSITE-ProRule" id="PRU00593"/>
    </source>
</evidence>
<evidence type="ECO:0000256" key="2">
    <source>
        <dbReference type="SAM" id="MobiDB-lite"/>
    </source>
</evidence>
<evidence type="ECO:0000303" key="3">
    <source>
    </source>
</evidence>
<evidence type="ECO:0000305" key="4">
    <source>
    </source>
</evidence>
<reference key="1">
    <citation type="journal article" date="2000" name="Nature">
        <title>Complete genome sequence of Pseudomonas aeruginosa PAO1, an opportunistic pathogen.</title>
        <authorList>
            <person name="Stover C.K."/>
            <person name="Pham X.-Q.T."/>
            <person name="Erwin A.L."/>
            <person name="Mizoguchi S.D."/>
            <person name="Warrener P."/>
            <person name="Hickey M.J."/>
            <person name="Brinkman F.S.L."/>
            <person name="Hufnagle W.O."/>
            <person name="Kowalik D.J."/>
            <person name="Lagrou M."/>
            <person name="Garber R.L."/>
            <person name="Goltry L."/>
            <person name="Tolentino E."/>
            <person name="Westbrock-Wadman S."/>
            <person name="Yuan Y."/>
            <person name="Brody L.L."/>
            <person name="Coulter S.N."/>
            <person name="Folger K.R."/>
            <person name="Kas A."/>
            <person name="Larbig K."/>
            <person name="Lim R.M."/>
            <person name="Smith K.A."/>
            <person name="Spencer D.H."/>
            <person name="Wong G.K.-S."/>
            <person name="Wu Z."/>
            <person name="Paulsen I.T."/>
            <person name="Reizer J."/>
            <person name="Saier M.H. Jr."/>
            <person name="Hancock R.E.W."/>
            <person name="Lory S."/>
            <person name="Olson M.V."/>
        </authorList>
    </citation>
    <scope>NUCLEOTIDE SEQUENCE [LARGE SCALE GENOMIC DNA]</scope>
    <source>
        <strain>ATCC 15692 / DSM 22644 / CIP 104116 / JCM 14847 / LMG 12228 / 1C / PRS 101 / PAO1</strain>
    </source>
</reference>
<reference key="2">
    <citation type="journal article" date="2010" name="Microbiology">
        <title>Regulation of the dauBAR operon and characterization of D-amino acid dehydrogenase DauA in arginine and lysine catabolism of Pseudomonas aeruginosa PAO1.</title>
        <authorList>
            <person name="Li C."/>
            <person name="Yao X."/>
            <person name="Lu C.D."/>
        </authorList>
    </citation>
    <scope>FUNCTION</scope>
    <source>
        <strain>ATCC 15692 / DSM 22644 / CIP 104116 / JCM 14847 / LMG 12228 / 1C / PRS 101 / PAO1</strain>
    </source>
</reference>